<organism>
    <name type="scientific">Mycobacterium tuberculosis (strain ATCC 25177 / H37Ra)</name>
    <dbReference type="NCBI Taxonomy" id="419947"/>
    <lineage>
        <taxon>Bacteria</taxon>
        <taxon>Bacillati</taxon>
        <taxon>Actinomycetota</taxon>
        <taxon>Actinomycetes</taxon>
        <taxon>Mycobacteriales</taxon>
        <taxon>Mycobacteriaceae</taxon>
        <taxon>Mycobacterium</taxon>
        <taxon>Mycobacterium tuberculosis complex</taxon>
    </lineage>
</organism>
<reference key="1">
    <citation type="journal article" date="2008" name="PLoS ONE">
        <title>Genetic basis of virulence attenuation revealed by comparative genomic analysis of Mycobacterium tuberculosis strain H37Ra versus H37Rv.</title>
        <authorList>
            <person name="Zheng H."/>
            <person name="Lu L."/>
            <person name="Wang B."/>
            <person name="Pu S."/>
            <person name="Zhang X."/>
            <person name="Zhu G."/>
            <person name="Shi W."/>
            <person name="Zhang L."/>
            <person name="Wang H."/>
            <person name="Wang S."/>
            <person name="Zhao G."/>
            <person name="Zhang Y."/>
        </authorList>
    </citation>
    <scope>NUCLEOTIDE SEQUENCE [LARGE SCALE GENOMIC DNA]</scope>
    <source>
        <strain>ATCC 25177 / H37Ra</strain>
    </source>
</reference>
<accession>A5U7Y3</accession>
<proteinExistence type="inferred from homology"/>
<keyword id="KW-0021">Allosteric enzyme</keyword>
<keyword id="KW-0328">Glycosyltransferase</keyword>
<keyword id="KW-0342">GTP-binding</keyword>
<keyword id="KW-0460">Magnesium</keyword>
<keyword id="KW-0547">Nucleotide-binding</keyword>
<keyword id="KW-1185">Reference proteome</keyword>
<keyword id="KW-0808">Transferase</keyword>
<evidence type="ECO:0000255" key="1">
    <source>
        <dbReference type="HAMAP-Rule" id="MF_01218"/>
    </source>
</evidence>
<name>UPP_MYCTA</name>
<dbReference type="EC" id="2.4.2.9" evidence="1"/>
<dbReference type="EMBL" id="CP000611">
    <property type="protein sequence ID" value="ABQ75133.1"/>
    <property type="molecule type" value="Genomic_DNA"/>
</dbReference>
<dbReference type="RefSeq" id="WP_003417245.1">
    <property type="nucleotide sequence ID" value="NZ_CP016972.1"/>
</dbReference>
<dbReference type="SMR" id="A5U7Y3"/>
<dbReference type="GeneID" id="45427304"/>
<dbReference type="KEGG" id="mra:MRA_3350"/>
<dbReference type="eggNOG" id="COG0035">
    <property type="taxonomic scope" value="Bacteria"/>
</dbReference>
<dbReference type="HOGENOM" id="CLU_067096_2_3_11"/>
<dbReference type="UniPathway" id="UPA00574">
    <property type="reaction ID" value="UER00636"/>
</dbReference>
<dbReference type="Proteomes" id="UP000001988">
    <property type="component" value="Chromosome"/>
</dbReference>
<dbReference type="GO" id="GO:0005525">
    <property type="term" value="F:GTP binding"/>
    <property type="evidence" value="ECO:0007669"/>
    <property type="project" value="UniProtKB-KW"/>
</dbReference>
<dbReference type="GO" id="GO:0000287">
    <property type="term" value="F:magnesium ion binding"/>
    <property type="evidence" value="ECO:0007669"/>
    <property type="project" value="UniProtKB-UniRule"/>
</dbReference>
<dbReference type="GO" id="GO:0004845">
    <property type="term" value="F:uracil phosphoribosyltransferase activity"/>
    <property type="evidence" value="ECO:0007669"/>
    <property type="project" value="UniProtKB-UniRule"/>
</dbReference>
<dbReference type="GO" id="GO:0044206">
    <property type="term" value="P:UMP salvage"/>
    <property type="evidence" value="ECO:0007669"/>
    <property type="project" value="UniProtKB-UniRule"/>
</dbReference>
<dbReference type="GO" id="GO:0006223">
    <property type="term" value="P:uracil salvage"/>
    <property type="evidence" value="ECO:0007669"/>
    <property type="project" value="InterPro"/>
</dbReference>
<dbReference type="CDD" id="cd06223">
    <property type="entry name" value="PRTases_typeI"/>
    <property type="match status" value="1"/>
</dbReference>
<dbReference type="FunFam" id="3.40.50.2020:FF:000003">
    <property type="entry name" value="Uracil phosphoribosyltransferase"/>
    <property type="match status" value="1"/>
</dbReference>
<dbReference type="Gene3D" id="3.40.50.2020">
    <property type="match status" value="1"/>
</dbReference>
<dbReference type="HAMAP" id="MF_01218_B">
    <property type="entry name" value="Upp_B"/>
    <property type="match status" value="1"/>
</dbReference>
<dbReference type="InterPro" id="IPR000836">
    <property type="entry name" value="PRibTrfase_dom"/>
</dbReference>
<dbReference type="InterPro" id="IPR029057">
    <property type="entry name" value="PRTase-like"/>
</dbReference>
<dbReference type="InterPro" id="IPR034332">
    <property type="entry name" value="Upp_B"/>
</dbReference>
<dbReference type="InterPro" id="IPR050054">
    <property type="entry name" value="UPRTase/APRTase"/>
</dbReference>
<dbReference type="InterPro" id="IPR005765">
    <property type="entry name" value="Ura_phspho_trans"/>
</dbReference>
<dbReference type="NCBIfam" id="NF001097">
    <property type="entry name" value="PRK00129.1"/>
    <property type="match status" value="1"/>
</dbReference>
<dbReference type="NCBIfam" id="TIGR01091">
    <property type="entry name" value="upp"/>
    <property type="match status" value="1"/>
</dbReference>
<dbReference type="PANTHER" id="PTHR32315">
    <property type="entry name" value="ADENINE PHOSPHORIBOSYLTRANSFERASE"/>
    <property type="match status" value="1"/>
</dbReference>
<dbReference type="PANTHER" id="PTHR32315:SF4">
    <property type="entry name" value="URACIL PHOSPHORIBOSYLTRANSFERASE, CHLOROPLASTIC"/>
    <property type="match status" value="1"/>
</dbReference>
<dbReference type="Pfam" id="PF14681">
    <property type="entry name" value="UPRTase"/>
    <property type="match status" value="1"/>
</dbReference>
<dbReference type="SUPFAM" id="SSF53271">
    <property type="entry name" value="PRTase-like"/>
    <property type="match status" value="1"/>
</dbReference>
<sequence length="207" mass="21898">MQVHVVDHPLAAARLTTLRDERTDNAGFRAALRELTLLLIYEATRDAPCEPVPIRTPLAETVGSRLTKPPLLVPVLRAGLGMVDEAHAALPEAHVGFVGVARDEQTHQPVPYLDSLPDDLTDVPVMVLDPMVATGGSMTHTLGLLISRGAADITVLCVVAAPEGIAALQKAAPNVRLFTAAIDEGLNEVAYIVPGLGDAGDRQFGPR</sequence>
<feature type="chain" id="PRO_1000053745" description="Uracil phosphoribosyltransferase">
    <location>
        <begin position="1"/>
        <end position="207"/>
    </location>
</feature>
<feature type="binding site" evidence="1">
    <location>
        <position position="77"/>
    </location>
    <ligand>
        <name>5-phospho-alpha-D-ribose 1-diphosphate</name>
        <dbReference type="ChEBI" id="CHEBI:58017"/>
    </ligand>
</feature>
<feature type="binding site" evidence="1">
    <location>
        <position position="102"/>
    </location>
    <ligand>
        <name>5-phospho-alpha-D-ribose 1-diphosphate</name>
        <dbReference type="ChEBI" id="CHEBI:58017"/>
    </ligand>
</feature>
<feature type="binding site" evidence="1">
    <location>
        <begin position="129"/>
        <end position="137"/>
    </location>
    <ligand>
        <name>5-phospho-alpha-D-ribose 1-diphosphate</name>
        <dbReference type="ChEBI" id="CHEBI:58017"/>
    </ligand>
</feature>
<feature type="binding site" evidence="1">
    <location>
        <position position="192"/>
    </location>
    <ligand>
        <name>uracil</name>
        <dbReference type="ChEBI" id="CHEBI:17568"/>
    </ligand>
</feature>
<feature type="binding site" evidence="1">
    <location>
        <begin position="197"/>
        <end position="199"/>
    </location>
    <ligand>
        <name>uracil</name>
        <dbReference type="ChEBI" id="CHEBI:17568"/>
    </ligand>
</feature>
<feature type="binding site" evidence="1">
    <location>
        <position position="198"/>
    </location>
    <ligand>
        <name>5-phospho-alpha-D-ribose 1-diphosphate</name>
        <dbReference type="ChEBI" id="CHEBI:58017"/>
    </ligand>
</feature>
<protein>
    <recommendedName>
        <fullName evidence="1">Uracil phosphoribosyltransferase</fullName>
        <ecNumber evidence="1">2.4.2.9</ecNumber>
    </recommendedName>
    <alternativeName>
        <fullName evidence="1">UMP pyrophosphorylase</fullName>
    </alternativeName>
    <alternativeName>
        <fullName evidence="1">UPRTase</fullName>
    </alternativeName>
</protein>
<comment type="function">
    <text evidence="1">Catalyzes the conversion of uracil and 5-phospho-alpha-D-ribose 1-diphosphate (PRPP) to UMP and diphosphate.</text>
</comment>
<comment type="catalytic activity">
    <reaction evidence="1">
        <text>UMP + diphosphate = 5-phospho-alpha-D-ribose 1-diphosphate + uracil</text>
        <dbReference type="Rhea" id="RHEA:13017"/>
        <dbReference type="ChEBI" id="CHEBI:17568"/>
        <dbReference type="ChEBI" id="CHEBI:33019"/>
        <dbReference type="ChEBI" id="CHEBI:57865"/>
        <dbReference type="ChEBI" id="CHEBI:58017"/>
        <dbReference type="EC" id="2.4.2.9"/>
    </reaction>
</comment>
<comment type="cofactor">
    <cofactor evidence="1">
        <name>Mg(2+)</name>
        <dbReference type="ChEBI" id="CHEBI:18420"/>
    </cofactor>
    <text evidence="1">Binds 1 Mg(2+) ion per subunit. The magnesium is bound as Mg-PRPP.</text>
</comment>
<comment type="activity regulation">
    <text evidence="1">Allosterically activated by GTP.</text>
</comment>
<comment type="pathway">
    <text evidence="1">Pyrimidine metabolism; UMP biosynthesis via salvage pathway; UMP from uracil: step 1/1.</text>
</comment>
<comment type="similarity">
    <text evidence="1">Belongs to the UPRTase family.</text>
</comment>
<gene>
    <name evidence="1" type="primary">upp</name>
    <name type="ordered locus">MRA_3350</name>
</gene>